<keyword id="KW-0416">Keratin</keyword>
<keyword id="KW-1267">Proteomics identification</keyword>
<keyword id="KW-1185">Reference proteome</keyword>
<keyword id="KW-0677">Repeat</keyword>
<protein>
    <recommendedName>
        <fullName>Keratin-associated protein 4-9</fullName>
    </recommendedName>
    <alternativeName>
        <fullName>Keratin-associated protein 4.9</fullName>
    </alternativeName>
    <alternativeName>
        <fullName>Ultrahigh sulfur keratin-associated protein 4.9</fullName>
    </alternativeName>
</protein>
<accession>Q9BYQ8</accession>
<name>KRA49_HUMAN</name>
<gene>
    <name type="primary">KRTAP4-9</name>
    <name type="synonym">KAP4.9</name>
    <name type="synonym">KRTAP4.9</name>
</gene>
<comment type="function">
    <text>In the hair cortex, hair keratin intermediate filaments are embedded in an interfilamentous matrix, consisting of hair keratin-associated proteins (KRTAP), which are essential for the formation of a rigid and resistant hair shaft through their extensive disulfide bond cross-linking with abundant cysteine residues of hair keratins. The matrix proteins include the high-sulfur and high-glycine-tyrosine keratins.</text>
</comment>
<comment type="subunit">
    <text>Interacts with hair keratins.</text>
</comment>
<comment type="tissue specificity">
    <text evidence="1">Expressed in the hair follicles.</text>
</comment>
<comment type="polymorphism">
    <text evidence="1">Numerous size polymorphism are present in KRTAP4 gene family, which are mainly due to variations in the sequence encoding cysteine-rich repeat segments (PubMed:15955084).</text>
</comment>
<comment type="similarity">
    <text evidence="2">Belongs to the KRTAP type 4 family.</text>
</comment>
<sequence length="210" mass="22405">MVSSCCGSVCSDQGCGQDLCQETCCRPSCCETTCCRTTCCRPSCCVSSCCRPQCCQSVCCQPTCSRPSCCQTTCCRTTCYRPSCCVSSCCRPQCCQPACCQPTCCRPSCCETTCCHPRCCISSCCRPSCCVSSCCKPQCCQSVCCQPNCCRPSCSISSCCRPSCCESSCCRPCCCVRPVCGRVSCHTTCYRPTCVISSCPRPLCCASSCC</sequence>
<feature type="chain" id="PRO_0000185176" description="Keratin-associated protein 4-9">
    <location>
        <begin position="1"/>
        <end position="210"/>
    </location>
</feature>
<feature type="repeat" description="1">
    <location>
        <begin position="24"/>
        <end position="28"/>
    </location>
</feature>
<feature type="repeat" description="2">
    <location>
        <begin position="29"/>
        <end position="33"/>
    </location>
</feature>
<feature type="repeat" description="3">
    <location>
        <begin position="34"/>
        <end position="38"/>
    </location>
</feature>
<feature type="repeat" description="4">
    <location>
        <begin position="39"/>
        <end position="43"/>
    </location>
</feature>
<feature type="repeat" description="5">
    <location>
        <begin position="44"/>
        <end position="48"/>
    </location>
</feature>
<feature type="repeat" description="6">
    <location>
        <begin position="49"/>
        <end position="53"/>
    </location>
</feature>
<feature type="repeat" description="7">
    <location>
        <begin position="54"/>
        <end position="58"/>
    </location>
</feature>
<feature type="repeat" description="8">
    <location>
        <begin position="59"/>
        <end position="63"/>
    </location>
</feature>
<feature type="repeat" description="9">
    <location>
        <begin position="69"/>
        <end position="73"/>
    </location>
</feature>
<feature type="repeat" description="10">
    <location>
        <begin position="74"/>
        <end position="78"/>
    </location>
</feature>
<feature type="repeat" description="12">
    <location>
        <begin position="84"/>
        <end position="88"/>
    </location>
</feature>
<feature type="repeat" description="13">
    <location>
        <begin position="89"/>
        <end position="93"/>
    </location>
</feature>
<feature type="repeat" description="14">
    <location>
        <begin position="94"/>
        <end position="98"/>
    </location>
</feature>
<feature type="repeat" description="15">
    <location>
        <begin position="99"/>
        <end position="103"/>
    </location>
</feature>
<feature type="repeat" description="16">
    <location>
        <begin position="104"/>
        <end position="108"/>
    </location>
</feature>
<feature type="repeat" description="17">
    <location>
        <begin position="109"/>
        <end position="113"/>
    </location>
</feature>
<feature type="repeat" description="18">
    <location>
        <begin position="114"/>
        <end position="118"/>
    </location>
</feature>
<feature type="repeat" description="19">
    <location>
        <begin position="119"/>
        <end position="123"/>
    </location>
</feature>
<feature type="repeat" description="20">
    <location>
        <begin position="124"/>
        <end position="128"/>
    </location>
</feature>
<feature type="repeat" description="21">
    <location>
        <begin position="129"/>
        <end position="133"/>
    </location>
</feature>
<feature type="repeat" description="22">
    <location>
        <begin position="134"/>
        <end position="138"/>
    </location>
</feature>
<feature type="repeat" description="23">
    <location>
        <begin position="139"/>
        <end position="143"/>
    </location>
</feature>
<feature type="repeat" description="24">
    <location>
        <begin position="144"/>
        <end position="148"/>
    </location>
</feature>
<feature type="repeat" description="25">
    <location>
        <begin position="149"/>
        <end position="153"/>
    </location>
</feature>
<feature type="repeat" description="26">
    <location>
        <begin position="159"/>
        <end position="163"/>
    </location>
</feature>
<feature type="repeat" description="27">
    <location>
        <begin position="164"/>
        <end position="168"/>
    </location>
</feature>
<feature type="repeat" description="28">
    <location>
        <begin position="169"/>
        <end position="173"/>
    </location>
</feature>
<feature type="repeat" description="29">
    <location>
        <begin position="174"/>
        <end position="178"/>
    </location>
</feature>
<feature type="region of interest" description="29 X 5 AA repeats of C-C-[RQVHIEK]-[SPTR]-[VSTQCRNP]">
    <location>
        <begin position="24"/>
        <end position="178"/>
    </location>
</feature>
<feature type="sequence variant" id="VAR_064552" description="In allele KAP.9-v1.">
    <location>
        <begin position="66"/>
        <end position="77"/>
    </location>
</feature>
<feature type="sequence conflict" description="In Ref. 2; CAC27580." evidence="2" ref="2">
    <original>A</original>
    <variation>V</variation>
    <location>
        <position position="98"/>
    </location>
</feature>
<proteinExistence type="evidence at protein level"/>
<dbReference type="EMBL" id="AC100808">
    <property type="status" value="NOT_ANNOTATED_CDS"/>
    <property type="molecule type" value="Genomic_DNA"/>
</dbReference>
<dbReference type="EMBL" id="AJ406941">
    <property type="protein sequence ID" value="CAC27580.1"/>
    <property type="molecule type" value="mRNA"/>
</dbReference>
<dbReference type="CCDS" id="CCDS54124.1"/>
<dbReference type="RefSeq" id="NP_001139513.1">
    <property type="nucleotide sequence ID" value="NM_001146041.1"/>
</dbReference>
<dbReference type="FunCoup" id="Q9BYQ8">
    <property type="interactions" value="14"/>
</dbReference>
<dbReference type="BioMuta" id="KRTAP4-9"/>
<dbReference type="DMDM" id="322510041"/>
<dbReference type="MassIVE" id="Q9BYQ8"/>
<dbReference type="PeptideAtlas" id="Q9BYQ8"/>
<dbReference type="DNASU" id="100132386"/>
<dbReference type="Ensembl" id="ENST00000391415.2">
    <property type="protein sequence ID" value="ENSP00000375234.1"/>
    <property type="gene ID" value="ENSG00000212722.9"/>
</dbReference>
<dbReference type="Ensembl" id="ENST00000709616.1">
    <property type="protein sequence ID" value="ENSP00000517801.1"/>
    <property type="gene ID" value="ENSG00000292052.1"/>
</dbReference>
<dbReference type="GeneID" id="100132386"/>
<dbReference type="KEGG" id="hsa:100132386"/>
<dbReference type="MANE-Select" id="ENST00000391415.2">
    <property type="protein sequence ID" value="ENSP00000375234.1"/>
    <property type="RefSeq nucleotide sequence ID" value="NM_001146041.1"/>
    <property type="RefSeq protein sequence ID" value="NP_001139513.1"/>
</dbReference>
<dbReference type="UCSC" id="uc010wfp.3">
    <property type="organism name" value="human"/>
</dbReference>
<dbReference type="AGR" id="HGNC:18910"/>
<dbReference type="CTD" id="100132386"/>
<dbReference type="GeneCards" id="KRTAP4-9"/>
<dbReference type="HGNC" id="HGNC:18910">
    <property type="gene designation" value="KRTAP4-9"/>
</dbReference>
<dbReference type="HPA" id="ENSG00000212722">
    <property type="expression patterns" value="Tissue enriched (skin)"/>
</dbReference>
<dbReference type="neXtProt" id="NX_Q9BYQ8"/>
<dbReference type="OpenTargets" id="ENSG00000212722"/>
<dbReference type="VEuPathDB" id="HostDB:ENSG00000212722"/>
<dbReference type="eggNOG" id="KOG4726">
    <property type="taxonomic scope" value="Eukaryota"/>
</dbReference>
<dbReference type="GeneTree" id="ENSGT00940000163975"/>
<dbReference type="InParanoid" id="Q9BYQ8"/>
<dbReference type="OMA" id="RPQGCIS"/>
<dbReference type="PAN-GO" id="Q9BYQ8">
    <property type="GO annotations" value="0 GO annotations based on evolutionary models"/>
</dbReference>
<dbReference type="TreeFam" id="TF351356"/>
<dbReference type="PathwayCommons" id="Q9BYQ8"/>
<dbReference type="Reactome" id="R-HSA-6805567">
    <property type="pathway name" value="Keratinization"/>
</dbReference>
<dbReference type="BioGRID-ORCS" id="100132386">
    <property type="hits" value="13 hits in 1035 CRISPR screens"/>
</dbReference>
<dbReference type="GenomeRNAi" id="100132386"/>
<dbReference type="Pharos" id="Q9BYQ8">
    <property type="development level" value="Tbio"/>
</dbReference>
<dbReference type="PRO" id="PR:Q9BYQ8"/>
<dbReference type="Proteomes" id="UP000005640">
    <property type="component" value="Chromosome 17"/>
</dbReference>
<dbReference type="RNAct" id="Q9BYQ8">
    <property type="molecule type" value="protein"/>
</dbReference>
<dbReference type="Bgee" id="ENSG00000212722">
    <property type="expression patterns" value="Expressed in skin of abdomen and 22 other cell types or tissues"/>
</dbReference>
<dbReference type="ExpressionAtlas" id="Q9BYQ8">
    <property type="expression patterns" value="baseline and differential"/>
</dbReference>
<dbReference type="GO" id="GO:0005829">
    <property type="term" value="C:cytosol"/>
    <property type="evidence" value="ECO:0000304"/>
    <property type="project" value="Reactome"/>
</dbReference>
<dbReference type="GO" id="GO:0045095">
    <property type="term" value="C:keratin filament"/>
    <property type="evidence" value="ECO:0007669"/>
    <property type="project" value="InterPro"/>
</dbReference>
<dbReference type="GO" id="GO:0042633">
    <property type="term" value="P:hair cycle"/>
    <property type="evidence" value="ECO:0000314"/>
    <property type="project" value="UniProtKB"/>
</dbReference>
<dbReference type="InterPro" id="IPR002494">
    <property type="entry name" value="KAP"/>
</dbReference>
<dbReference type="PANTHER" id="PTHR23262">
    <property type="entry name" value="KERATIN ASSOCIATED PROTEIN"/>
    <property type="match status" value="1"/>
</dbReference>
<dbReference type="PANTHER" id="PTHR23262:SF248">
    <property type="entry name" value="KERATIN-ASSOCIATED PROTEIN 4-6"/>
    <property type="match status" value="1"/>
</dbReference>
<dbReference type="Pfam" id="PF01500">
    <property type="entry name" value="Keratin_B2"/>
    <property type="match status" value="1"/>
</dbReference>
<dbReference type="Pfam" id="PF13885">
    <property type="entry name" value="Keratin_B2_2"/>
    <property type="match status" value="1"/>
</dbReference>
<organism>
    <name type="scientific">Homo sapiens</name>
    <name type="common">Human</name>
    <dbReference type="NCBI Taxonomy" id="9606"/>
    <lineage>
        <taxon>Eukaryota</taxon>
        <taxon>Metazoa</taxon>
        <taxon>Chordata</taxon>
        <taxon>Craniata</taxon>
        <taxon>Vertebrata</taxon>
        <taxon>Euteleostomi</taxon>
        <taxon>Mammalia</taxon>
        <taxon>Eutheria</taxon>
        <taxon>Euarchontoglires</taxon>
        <taxon>Primates</taxon>
        <taxon>Haplorrhini</taxon>
        <taxon>Catarrhini</taxon>
        <taxon>Hominidae</taxon>
        <taxon>Homo</taxon>
    </lineage>
</organism>
<evidence type="ECO:0000269" key="1">
    <source>
    </source>
</evidence>
<evidence type="ECO:0000305" key="2"/>
<reference key="1">
    <citation type="journal article" date="2006" name="Nature">
        <title>DNA sequence of human chromosome 17 and analysis of rearrangement in the human lineage.</title>
        <authorList>
            <person name="Zody M.C."/>
            <person name="Garber M."/>
            <person name="Adams D.J."/>
            <person name="Sharpe T."/>
            <person name="Harrow J."/>
            <person name="Lupski J.R."/>
            <person name="Nicholson C."/>
            <person name="Searle S.M."/>
            <person name="Wilming L."/>
            <person name="Young S.K."/>
            <person name="Abouelleil A."/>
            <person name="Allen N.R."/>
            <person name="Bi W."/>
            <person name="Bloom T."/>
            <person name="Borowsky M.L."/>
            <person name="Bugalter B.E."/>
            <person name="Butler J."/>
            <person name="Chang J.L."/>
            <person name="Chen C.-K."/>
            <person name="Cook A."/>
            <person name="Corum B."/>
            <person name="Cuomo C.A."/>
            <person name="de Jong P.J."/>
            <person name="DeCaprio D."/>
            <person name="Dewar K."/>
            <person name="FitzGerald M."/>
            <person name="Gilbert J."/>
            <person name="Gibson R."/>
            <person name="Gnerre S."/>
            <person name="Goldstein S."/>
            <person name="Grafham D.V."/>
            <person name="Grocock R."/>
            <person name="Hafez N."/>
            <person name="Hagopian D.S."/>
            <person name="Hart E."/>
            <person name="Norman C.H."/>
            <person name="Humphray S."/>
            <person name="Jaffe D.B."/>
            <person name="Jones M."/>
            <person name="Kamal M."/>
            <person name="Khodiyar V.K."/>
            <person name="LaButti K."/>
            <person name="Laird G."/>
            <person name="Lehoczky J."/>
            <person name="Liu X."/>
            <person name="Lokyitsang T."/>
            <person name="Loveland J."/>
            <person name="Lui A."/>
            <person name="Macdonald P."/>
            <person name="Major J.E."/>
            <person name="Matthews L."/>
            <person name="Mauceli E."/>
            <person name="McCarroll S.A."/>
            <person name="Mihalev A.H."/>
            <person name="Mudge J."/>
            <person name="Nguyen C."/>
            <person name="Nicol R."/>
            <person name="O'Leary S.B."/>
            <person name="Osoegawa K."/>
            <person name="Schwartz D.C."/>
            <person name="Shaw-Smith C."/>
            <person name="Stankiewicz P."/>
            <person name="Steward C."/>
            <person name="Swarbreck D."/>
            <person name="Venkataraman V."/>
            <person name="Whittaker C.A."/>
            <person name="Yang X."/>
            <person name="Zimmer A.R."/>
            <person name="Bradley A."/>
            <person name="Hubbard T."/>
            <person name="Birren B.W."/>
            <person name="Rogers J."/>
            <person name="Lander E.S."/>
            <person name="Nusbaum C."/>
        </authorList>
    </citation>
    <scope>NUCLEOTIDE SEQUENCE [LARGE SCALE GENOMIC DNA]</scope>
</reference>
<reference key="2">
    <citation type="journal article" date="2001" name="J. Biol. Chem.">
        <title>Characterization of a cluster of human high/ultrahigh sulfur keratin-associated protein genes embedded in the type I keratin gene domain on chromosome 17q12-21.</title>
        <authorList>
            <person name="Rogers M.A."/>
            <person name="Langbein L."/>
            <person name="Winter H."/>
            <person name="Ehmann C."/>
            <person name="Praetzel S."/>
            <person name="Korn B."/>
            <person name="Schweizer J."/>
        </authorList>
    </citation>
    <scope>NUCLEOTIDE SEQUENCE [MRNA] OF 20-210</scope>
    <source>
        <tissue>Scalp</tissue>
    </source>
</reference>
<reference key="3">
    <citation type="journal article" date="2005" name="J. Invest. Dermatol.">
        <title>Size polymorphisms in the human ultrahigh sulfur hair keratin-associated protein 4, KAP4, gene family.</title>
        <authorList>
            <person name="Kariya N."/>
            <person name="Shimomura Y."/>
            <person name="Ito M."/>
        </authorList>
    </citation>
    <scope>TISSUE SPECIFICITY</scope>
    <scope>POLYMORPHISM</scope>
    <scope>VARIANT 66-HIS--CYS-77 DEL</scope>
</reference>